<accession>Q54CH6</accession>
<dbReference type="EMBL" id="AAFI02000197">
    <property type="protein sequence ID" value="EAL61006.1"/>
    <property type="molecule type" value="Genomic_DNA"/>
</dbReference>
<dbReference type="RefSeq" id="XP_629440.1">
    <property type="nucleotide sequence ID" value="XM_629438.1"/>
</dbReference>
<dbReference type="SMR" id="Q54CH6"/>
<dbReference type="STRING" id="44689.Q54CH6"/>
<dbReference type="PaxDb" id="44689-DDB0266390"/>
<dbReference type="EnsemblProtists" id="EAL61006">
    <property type="protein sequence ID" value="EAL61006"/>
    <property type="gene ID" value="DDB_G0292914"/>
</dbReference>
<dbReference type="GeneID" id="8628959"/>
<dbReference type="KEGG" id="ddi:DDB_G0292914"/>
<dbReference type="dictyBase" id="DDB_G0292914"/>
<dbReference type="VEuPathDB" id="AmoebaDB:DDB_G0292914"/>
<dbReference type="eggNOG" id="KOG0327">
    <property type="taxonomic scope" value="Eukaryota"/>
</dbReference>
<dbReference type="HOGENOM" id="CLU_1121801_0_0_1"/>
<dbReference type="InParanoid" id="Q54CH6"/>
<dbReference type="OMA" id="ITHHELM"/>
<dbReference type="PhylomeDB" id="Q54CH6"/>
<dbReference type="Proteomes" id="UP000002195">
    <property type="component" value="Chromosome 6"/>
</dbReference>
<dbReference type="GO" id="GO:0010494">
    <property type="term" value="C:cytoplasmic stress granule"/>
    <property type="evidence" value="ECO:0000318"/>
    <property type="project" value="GO_Central"/>
</dbReference>
<dbReference type="GO" id="GO:0000932">
    <property type="term" value="C:P-body"/>
    <property type="evidence" value="ECO:0000318"/>
    <property type="project" value="GO_Central"/>
</dbReference>
<dbReference type="GO" id="GO:0005524">
    <property type="term" value="F:ATP binding"/>
    <property type="evidence" value="ECO:0007669"/>
    <property type="project" value="UniProtKB-KW"/>
</dbReference>
<dbReference type="GO" id="GO:0016787">
    <property type="term" value="F:hydrolase activity"/>
    <property type="evidence" value="ECO:0007669"/>
    <property type="project" value="UniProtKB-KW"/>
</dbReference>
<dbReference type="GO" id="GO:0003729">
    <property type="term" value="F:mRNA binding"/>
    <property type="evidence" value="ECO:0000318"/>
    <property type="project" value="GO_Central"/>
</dbReference>
<dbReference type="GO" id="GO:0003724">
    <property type="term" value="F:RNA helicase activity"/>
    <property type="evidence" value="ECO:0007669"/>
    <property type="project" value="InterPro"/>
</dbReference>
<dbReference type="GO" id="GO:0017148">
    <property type="term" value="P:negative regulation of translation"/>
    <property type="evidence" value="ECO:0000318"/>
    <property type="project" value="GO_Central"/>
</dbReference>
<dbReference type="GO" id="GO:0033962">
    <property type="term" value="P:P-body assembly"/>
    <property type="evidence" value="ECO:0000318"/>
    <property type="project" value="GO_Central"/>
</dbReference>
<dbReference type="GO" id="GO:0034063">
    <property type="term" value="P:stress granule assembly"/>
    <property type="evidence" value="ECO:0000318"/>
    <property type="project" value="GO_Central"/>
</dbReference>
<dbReference type="CDD" id="cd00268">
    <property type="entry name" value="DEADc"/>
    <property type="match status" value="1"/>
</dbReference>
<dbReference type="Gene3D" id="3.40.50.300">
    <property type="entry name" value="P-loop containing nucleotide triphosphate hydrolases"/>
    <property type="match status" value="1"/>
</dbReference>
<dbReference type="InterPro" id="IPR011545">
    <property type="entry name" value="DEAD/DEAH_box_helicase_dom"/>
</dbReference>
<dbReference type="InterPro" id="IPR014001">
    <property type="entry name" value="Helicase_ATP-bd"/>
</dbReference>
<dbReference type="InterPro" id="IPR027417">
    <property type="entry name" value="P-loop_NTPase"/>
</dbReference>
<dbReference type="InterPro" id="IPR014014">
    <property type="entry name" value="RNA_helicase_DEAD_Q_motif"/>
</dbReference>
<dbReference type="PANTHER" id="PTHR47960">
    <property type="entry name" value="DEAD-BOX ATP-DEPENDENT RNA HELICASE 50"/>
    <property type="match status" value="1"/>
</dbReference>
<dbReference type="Pfam" id="PF00270">
    <property type="entry name" value="DEAD"/>
    <property type="match status" value="1"/>
</dbReference>
<dbReference type="SMART" id="SM00487">
    <property type="entry name" value="DEXDc"/>
    <property type="match status" value="1"/>
</dbReference>
<dbReference type="SUPFAM" id="SSF52540">
    <property type="entry name" value="P-loop containing nucleoside triphosphate hydrolases"/>
    <property type="match status" value="1"/>
</dbReference>
<dbReference type="PROSITE" id="PS51192">
    <property type="entry name" value="HELICASE_ATP_BIND_1"/>
    <property type="match status" value="1"/>
</dbReference>
<dbReference type="PROSITE" id="PS51195">
    <property type="entry name" value="Q_MOTIF"/>
    <property type="match status" value="1"/>
</dbReference>
<feature type="chain" id="PRO_0000327575" description="Putative eukaryotic initiation factor 4A-like protein">
    <location>
        <begin position="1"/>
        <end position="248"/>
    </location>
</feature>
<feature type="domain" description="Helicase ATP-binding" evidence="1">
    <location>
        <begin position="45"/>
        <end position="239"/>
    </location>
</feature>
<feature type="short sequence motif" description="Q motif">
    <location>
        <begin position="14"/>
        <end position="42"/>
    </location>
</feature>
<feature type="short sequence motif" description="DEAD box">
    <location>
        <begin position="185"/>
        <end position="188"/>
    </location>
</feature>
<feature type="binding site" evidence="1">
    <location>
        <begin position="58"/>
        <end position="65"/>
    </location>
    <ligand>
        <name>ATP</name>
        <dbReference type="ChEBI" id="CHEBI:30616"/>
    </ligand>
</feature>
<organism>
    <name type="scientific">Dictyostelium discoideum</name>
    <name type="common">Social amoeba</name>
    <dbReference type="NCBI Taxonomy" id="44689"/>
    <lineage>
        <taxon>Eukaryota</taxon>
        <taxon>Amoebozoa</taxon>
        <taxon>Evosea</taxon>
        <taxon>Eumycetozoa</taxon>
        <taxon>Dictyostelia</taxon>
        <taxon>Dictyosteliales</taxon>
        <taxon>Dictyosteliaceae</taxon>
        <taxon>Dictyostelium</taxon>
    </lineage>
</organism>
<comment type="similarity">
    <text evidence="2">Belongs to the DEAD box helicase family. eIF4A subfamily.</text>
</comment>
<comment type="caution">
    <text evidence="2">Could be the product of a pseudogene.</text>
</comment>
<reference key="1">
    <citation type="journal article" date="2005" name="Nature">
        <title>The genome of the social amoeba Dictyostelium discoideum.</title>
        <authorList>
            <person name="Eichinger L."/>
            <person name="Pachebat J.A."/>
            <person name="Gloeckner G."/>
            <person name="Rajandream M.A."/>
            <person name="Sucgang R."/>
            <person name="Berriman M."/>
            <person name="Song J."/>
            <person name="Olsen R."/>
            <person name="Szafranski K."/>
            <person name="Xu Q."/>
            <person name="Tunggal B."/>
            <person name="Kummerfeld S."/>
            <person name="Madera M."/>
            <person name="Konfortov B.A."/>
            <person name="Rivero F."/>
            <person name="Bankier A.T."/>
            <person name="Lehmann R."/>
            <person name="Hamlin N."/>
            <person name="Davies R."/>
            <person name="Gaudet P."/>
            <person name="Fey P."/>
            <person name="Pilcher K."/>
            <person name="Chen G."/>
            <person name="Saunders D."/>
            <person name="Sodergren E.J."/>
            <person name="Davis P."/>
            <person name="Kerhornou A."/>
            <person name="Nie X."/>
            <person name="Hall N."/>
            <person name="Anjard C."/>
            <person name="Hemphill L."/>
            <person name="Bason N."/>
            <person name="Farbrother P."/>
            <person name="Desany B."/>
            <person name="Just E."/>
            <person name="Morio T."/>
            <person name="Rost R."/>
            <person name="Churcher C.M."/>
            <person name="Cooper J."/>
            <person name="Haydock S."/>
            <person name="van Driessche N."/>
            <person name="Cronin A."/>
            <person name="Goodhead I."/>
            <person name="Muzny D.M."/>
            <person name="Mourier T."/>
            <person name="Pain A."/>
            <person name="Lu M."/>
            <person name="Harper D."/>
            <person name="Lindsay R."/>
            <person name="Hauser H."/>
            <person name="James K.D."/>
            <person name="Quiles M."/>
            <person name="Madan Babu M."/>
            <person name="Saito T."/>
            <person name="Buchrieser C."/>
            <person name="Wardroper A."/>
            <person name="Felder M."/>
            <person name="Thangavelu M."/>
            <person name="Johnson D."/>
            <person name="Knights A."/>
            <person name="Loulseged H."/>
            <person name="Mungall K.L."/>
            <person name="Oliver K."/>
            <person name="Price C."/>
            <person name="Quail M.A."/>
            <person name="Urushihara H."/>
            <person name="Hernandez J."/>
            <person name="Rabbinowitsch E."/>
            <person name="Steffen D."/>
            <person name="Sanders M."/>
            <person name="Ma J."/>
            <person name="Kohara Y."/>
            <person name="Sharp S."/>
            <person name="Simmonds M.N."/>
            <person name="Spiegler S."/>
            <person name="Tivey A."/>
            <person name="Sugano S."/>
            <person name="White B."/>
            <person name="Walker D."/>
            <person name="Woodward J.R."/>
            <person name="Winckler T."/>
            <person name="Tanaka Y."/>
            <person name="Shaulsky G."/>
            <person name="Schleicher M."/>
            <person name="Weinstock G.M."/>
            <person name="Rosenthal A."/>
            <person name="Cox E.C."/>
            <person name="Chisholm R.L."/>
            <person name="Gibbs R.A."/>
            <person name="Loomis W.F."/>
            <person name="Platzer M."/>
            <person name="Kay R.R."/>
            <person name="Williams J.G."/>
            <person name="Dear P.H."/>
            <person name="Noegel A.A."/>
            <person name="Barrell B.G."/>
            <person name="Kuspa A."/>
        </authorList>
    </citation>
    <scope>NUCLEOTIDE SEQUENCE [LARGE SCALE GENOMIC DNA]</scope>
    <source>
        <strain>AX4</strain>
    </source>
</reference>
<proteinExistence type="uncertain"/>
<gene>
    <name type="ORF">DDB_G0292914</name>
</gene>
<sequence>MSEGDLFLISFLKVGFASLGLNEQLINNIKRYGITKLTPFQMEVIKEIKENSNVIVDSIEGTGRTISLIIGTLDKIDETKQQQEQEQQERQQTDQQFSFPQILMILPTKELSQTTKVIYSSLGGGENNNNDFKVLSCIGGVKISMDIEILKKGNTQILLGTPGRISDLFSRKRFDTDNIKILVFDELDEILSRGFECQLEDIIKPLNNNNNLQIIVSTSGINELTSNFINTFIKIPKIIKSQQEPYKF</sequence>
<protein>
    <recommendedName>
        <fullName>Putative eukaryotic initiation factor 4A-like protein</fullName>
    </recommendedName>
</protein>
<keyword id="KW-0067">ATP-binding</keyword>
<keyword id="KW-0347">Helicase</keyword>
<keyword id="KW-0378">Hydrolase</keyword>
<keyword id="KW-0547">Nucleotide-binding</keyword>
<keyword id="KW-1185">Reference proteome</keyword>
<name>IF4AX_DICDI</name>
<evidence type="ECO:0000255" key="1">
    <source>
        <dbReference type="PROSITE-ProRule" id="PRU00541"/>
    </source>
</evidence>
<evidence type="ECO:0000305" key="2"/>